<reference key="1">
    <citation type="journal article" date="1981" name="Eur. J. Biochem.">
        <title>The amino-acid sequence of the alpha subunit of the mitogenic lectin from Vicia sativa.</title>
        <authorList>
            <person name="Gebauer G."/>
            <person name="Schiltz E."/>
            <person name="Ruediger H."/>
        </authorList>
    </citation>
    <scope>PROTEIN SEQUENCE</scope>
    <source>
        <strain>cv. Angustifolia</strain>
    </source>
</reference>
<feature type="chain" id="PRO_0000105117" description="Mitogenic lectin alpha chain">
    <location>
        <begin position="1"/>
        <end position="52"/>
    </location>
</feature>
<accession>P16350</accession>
<name>LECA_VICSA</name>
<evidence type="ECO:0000305" key="1"/>
<sequence>SVTSYGLSAVVPLKDVVPEWVRIGFSATTGAEYAAHEVLSWSFHSELGGTSS</sequence>
<dbReference type="PIR" id="S04821">
    <property type="entry name" value="S04821"/>
</dbReference>
<dbReference type="GO" id="GO:0030246">
    <property type="term" value="F:carbohydrate binding"/>
    <property type="evidence" value="ECO:0007669"/>
    <property type="project" value="UniProtKB-KW"/>
</dbReference>
<dbReference type="Gene3D" id="2.60.120.200">
    <property type="match status" value="1"/>
</dbReference>
<dbReference type="InterPro" id="IPR013320">
    <property type="entry name" value="ConA-like_dom_sf"/>
</dbReference>
<dbReference type="InterPro" id="IPR000985">
    <property type="entry name" value="Lectin_LegA_CS"/>
</dbReference>
<dbReference type="InterPro" id="IPR001220">
    <property type="entry name" value="Legume_lectin_dom"/>
</dbReference>
<dbReference type="Pfam" id="PF00139">
    <property type="entry name" value="Lectin_legB"/>
    <property type="match status" value="1"/>
</dbReference>
<dbReference type="SUPFAM" id="SSF49899">
    <property type="entry name" value="Concanavalin A-like lectins/glucanases"/>
    <property type="match status" value="1"/>
</dbReference>
<dbReference type="PROSITE" id="PS00308">
    <property type="entry name" value="LECTIN_LEGUME_ALPHA"/>
    <property type="match status" value="1"/>
</dbReference>
<keyword id="KW-0903">Direct protein sequencing</keyword>
<keyword id="KW-0430">Lectin</keyword>
<protein>
    <recommendedName>
        <fullName>Mitogenic lectin alpha chain</fullName>
    </recommendedName>
</protein>
<comment type="subunit">
    <text>Tetramer of two alpha and two beta chains.</text>
</comment>
<comment type="similarity">
    <text evidence="1">Belongs to the leguminous lectin family.</text>
</comment>
<organism>
    <name type="scientific">Vicia sativa</name>
    <name type="common">Spring vetch</name>
    <name type="synonym">Tare</name>
    <dbReference type="NCBI Taxonomy" id="3908"/>
    <lineage>
        <taxon>Eukaryota</taxon>
        <taxon>Viridiplantae</taxon>
        <taxon>Streptophyta</taxon>
        <taxon>Embryophyta</taxon>
        <taxon>Tracheophyta</taxon>
        <taxon>Spermatophyta</taxon>
        <taxon>Magnoliopsida</taxon>
        <taxon>eudicotyledons</taxon>
        <taxon>Gunneridae</taxon>
        <taxon>Pentapetalae</taxon>
        <taxon>rosids</taxon>
        <taxon>fabids</taxon>
        <taxon>Fabales</taxon>
        <taxon>Fabaceae</taxon>
        <taxon>Papilionoideae</taxon>
        <taxon>50 kb inversion clade</taxon>
        <taxon>NPAAA clade</taxon>
        <taxon>Hologalegina</taxon>
        <taxon>IRL clade</taxon>
        <taxon>Fabeae</taxon>
        <taxon>Vicia</taxon>
    </lineage>
</organism>
<proteinExistence type="evidence at protein level"/>